<evidence type="ECO:0000250" key="1"/>
<evidence type="ECO:0000250" key="2">
    <source>
        <dbReference type="UniProtKB" id="I7HUG0"/>
    </source>
</evidence>
<evidence type="ECO:0000250" key="3">
    <source>
        <dbReference type="UniProtKB" id="P40087"/>
    </source>
</evidence>
<evidence type="ECO:0000255" key="4">
    <source>
        <dbReference type="PROSITE-ProRule" id="PRU00212"/>
    </source>
</evidence>
<evidence type="ECO:0000255" key="5">
    <source>
        <dbReference type="PROSITE-ProRule" id="PRU00214"/>
    </source>
</evidence>
<evidence type="ECO:0000256" key="6">
    <source>
        <dbReference type="SAM" id="MobiDB-lite"/>
    </source>
</evidence>
<evidence type="ECO:0000305" key="7"/>
<reference key="1">
    <citation type="journal article" date="2008" name="PLoS Genet.">
        <title>Genomic islands in the pathogenic filamentous fungus Aspergillus fumigatus.</title>
        <authorList>
            <person name="Fedorova N.D."/>
            <person name="Khaldi N."/>
            <person name="Joardar V.S."/>
            <person name="Maiti R."/>
            <person name="Amedeo P."/>
            <person name="Anderson M.J."/>
            <person name="Crabtree J."/>
            <person name="Silva J.C."/>
            <person name="Badger J.H."/>
            <person name="Albarraq A."/>
            <person name="Angiuoli S."/>
            <person name="Bussey H."/>
            <person name="Bowyer P."/>
            <person name="Cotty P.J."/>
            <person name="Dyer P.S."/>
            <person name="Egan A."/>
            <person name="Galens K."/>
            <person name="Fraser-Liggett C.M."/>
            <person name="Haas B.J."/>
            <person name="Inman J.M."/>
            <person name="Kent R."/>
            <person name="Lemieux S."/>
            <person name="Malavazi I."/>
            <person name="Orvis J."/>
            <person name="Roemer T."/>
            <person name="Ronning C.M."/>
            <person name="Sundaram J.P."/>
            <person name="Sutton G."/>
            <person name="Turner G."/>
            <person name="Venter J.C."/>
            <person name="White O.R."/>
            <person name="Whitty B.R."/>
            <person name="Youngman P."/>
            <person name="Wolfe K.H."/>
            <person name="Goldman G.H."/>
            <person name="Wortman J.R."/>
            <person name="Jiang B."/>
            <person name="Denning D.W."/>
            <person name="Nierman W.C."/>
        </authorList>
    </citation>
    <scope>NUCLEOTIDE SEQUENCE [LARGE SCALE GENOMIC DNA]</scope>
    <source>
        <strain>ATCC 1020 / DSM 3700 / CBS 544.65 / FGSC A1164 / JCM 1740 / NRRL 181 / WB 181</strain>
    </source>
</reference>
<dbReference type="EC" id="3.4.23.-" evidence="2"/>
<dbReference type="EMBL" id="DS027695">
    <property type="protein sequence ID" value="EAW19655.1"/>
    <property type="molecule type" value="Genomic_DNA"/>
</dbReference>
<dbReference type="RefSeq" id="XP_001261552.1">
    <property type="nucleotide sequence ID" value="XM_001261551.1"/>
</dbReference>
<dbReference type="SMR" id="A1DCU5"/>
<dbReference type="STRING" id="331117.A1DCU5"/>
<dbReference type="EnsemblFungi" id="EAW19655">
    <property type="protein sequence ID" value="EAW19655"/>
    <property type="gene ID" value="NFIA_027290"/>
</dbReference>
<dbReference type="GeneID" id="4587924"/>
<dbReference type="KEGG" id="nfi:NFIA_027290"/>
<dbReference type="VEuPathDB" id="FungiDB:NFIA_027290"/>
<dbReference type="eggNOG" id="KOG0012">
    <property type="taxonomic scope" value="Eukaryota"/>
</dbReference>
<dbReference type="HOGENOM" id="CLU_020435_2_0_1"/>
<dbReference type="OMA" id="GHRLNAF"/>
<dbReference type="OrthoDB" id="1047367at2759"/>
<dbReference type="Proteomes" id="UP000006702">
    <property type="component" value="Unassembled WGS sequence"/>
</dbReference>
<dbReference type="GO" id="GO:0005737">
    <property type="term" value="C:cytoplasm"/>
    <property type="evidence" value="ECO:0007669"/>
    <property type="project" value="UniProtKB-SubCell"/>
</dbReference>
<dbReference type="GO" id="GO:0004190">
    <property type="term" value="F:aspartic-type endopeptidase activity"/>
    <property type="evidence" value="ECO:0007669"/>
    <property type="project" value="UniProtKB-KW"/>
</dbReference>
<dbReference type="GO" id="GO:0015031">
    <property type="term" value="P:protein transport"/>
    <property type="evidence" value="ECO:0007669"/>
    <property type="project" value="UniProtKB-KW"/>
</dbReference>
<dbReference type="GO" id="GO:0006508">
    <property type="term" value="P:proteolysis"/>
    <property type="evidence" value="ECO:0007669"/>
    <property type="project" value="UniProtKB-KW"/>
</dbReference>
<dbReference type="CDD" id="cd05479">
    <property type="entry name" value="RP_DDI"/>
    <property type="match status" value="1"/>
</dbReference>
<dbReference type="CDD" id="cd01796">
    <property type="entry name" value="Ubl_Ddi1_like"/>
    <property type="match status" value="1"/>
</dbReference>
<dbReference type="Gene3D" id="2.40.70.10">
    <property type="entry name" value="Acid Proteases"/>
    <property type="match status" value="1"/>
</dbReference>
<dbReference type="Gene3D" id="1.10.8.10">
    <property type="entry name" value="DNA helicase RuvA subunit, C-terminal domain"/>
    <property type="match status" value="1"/>
</dbReference>
<dbReference type="Gene3D" id="3.10.20.90">
    <property type="entry name" value="Phosphatidylinositol 3-kinase Catalytic Subunit, Chain A, domain 1"/>
    <property type="match status" value="1"/>
</dbReference>
<dbReference type="InterPro" id="IPR033882">
    <property type="entry name" value="DDI1_N"/>
</dbReference>
<dbReference type="InterPro" id="IPR019103">
    <property type="entry name" value="Peptidase_aspartic_DDI1-type"/>
</dbReference>
<dbReference type="InterPro" id="IPR021109">
    <property type="entry name" value="Peptidase_aspartic_dom_sf"/>
</dbReference>
<dbReference type="InterPro" id="IPR015940">
    <property type="entry name" value="UBA"/>
</dbReference>
<dbReference type="InterPro" id="IPR009060">
    <property type="entry name" value="UBA-like_sf"/>
</dbReference>
<dbReference type="InterPro" id="IPR000626">
    <property type="entry name" value="Ubiquitin-like_dom"/>
</dbReference>
<dbReference type="InterPro" id="IPR029071">
    <property type="entry name" value="Ubiquitin-like_domsf"/>
</dbReference>
<dbReference type="PANTHER" id="PTHR12917">
    <property type="entry name" value="ASPARTYL PROTEASE DDI-RELATED"/>
    <property type="match status" value="1"/>
</dbReference>
<dbReference type="PANTHER" id="PTHR12917:SF1">
    <property type="entry name" value="AT13091P"/>
    <property type="match status" value="1"/>
</dbReference>
<dbReference type="Pfam" id="PF09668">
    <property type="entry name" value="Asp_protease"/>
    <property type="match status" value="1"/>
</dbReference>
<dbReference type="Pfam" id="PF24669">
    <property type="entry name" value="Ddi2_HDD"/>
    <property type="match status" value="1"/>
</dbReference>
<dbReference type="Pfam" id="PF00627">
    <property type="entry name" value="UBA"/>
    <property type="match status" value="1"/>
</dbReference>
<dbReference type="Pfam" id="PF00240">
    <property type="entry name" value="ubiquitin"/>
    <property type="match status" value="1"/>
</dbReference>
<dbReference type="SMART" id="SM00165">
    <property type="entry name" value="UBA"/>
    <property type="match status" value="1"/>
</dbReference>
<dbReference type="SUPFAM" id="SSF50630">
    <property type="entry name" value="Acid proteases"/>
    <property type="match status" value="1"/>
</dbReference>
<dbReference type="SUPFAM" id="SSF46934">
    <property type="entry name" value="UBA-like"/>
    <property type="match status" value="1"/>
</dbReference>
<dbReference type="SUPFAM" id="SSF54236">
    <property type="entry name" value="Ubiquitin-like"/>
    <property type="match status" value="1"/>
</dbReference>
<dbReference type="PROSITE" id="PS50030">
    <property type="entry name" value="UBA"/>
    <property type="match status" value="1"/>
</dbReference>
<dbReference type="PROSITE" id="PS50053">
    <property type="entry name" value="UBIQUITIN_2"/>
    <property type="match status" value="1"/>
</dbReference>
<gene>
    <name type="primary">ddi1</name>
    <name type="ORF">NFIA_027290</name>
</gene>
<proteinExistence type="inferred from homology"/>
<protein>
    <recommendedName>
        <fullName>DNA damage-inducible protein 1</fullName>
        <ecNumber evidence="2">3.4.23.-</ecNumber>
    </recommendedName>
</protein>
<organism>
    <name type="scientific">Neosartorya fischeri (strain ATCC 1020 / DSM 3700 / CBS 544.65 / FGSC A1164 / JCM 1740 / NRRL 181 / WB 181)</name>
    <name type="common">Aspergillus fischerianus</name>
    <dbReference type="NCBI Taxonomy" id="331117"/>
    <lineage>
        <taxon>Eukaryota</taxon>
        <taxon>Fungi</taxon>
        <taxon>Dikarya</taxon>
        <taxon>Ascomycota</taxon>
        <taxon>Pezizomycotina</taxon>
        <taxon>Eurotiomycetes</taxon>
        <taxon>Eurotiomycetidae</taxon>
        <taxon>Eurotiales</taxon>
        <taxon>Aspergillaceae</taxon>
        <taxon>Aspergillus</taxon>
        <taxon>Aspergillus subgen. Fumigati</taxon>
    </lineage>
</organism>
<name>DDI1_NEOFI</name>
<sequence length="405" mass="43932">MTVELLKAIVESETSIPTNNQRLVYNNQLLGNDAQTLEQIGIGEGDMLGVHVTMRSPQAPARSIGGGPSAAAQQNLQRRQPMTPDPETIRLHILGDPRVREAVRRQNPELADAANDAQRFRDVLMAQQRREAQMEAEKEARIAMLNADPFNPENQREIEEIIRQNAVTENLHTAMEHHPESFGRVTMLYIPVEVNGHKVNAFVDSGAQVTIMSPECATACNIMRLVDRRYGGIAKGVGTATILGRVHSAQIKIGSMFLPCSFTVMEGKHIDLLLGLDMLKRHQACIDLKKGALVIQDEAVPFLGEADIPKELQEGFEDEPIVKGADGAEVGARTGAVTHQASGPGTSAAAPSSSTPRINIRPAPSSRWPQDSIAKITELGFTREEAVRALDAANGDLDGAIGFLI</sequence>
<feature type="chain" id="PRO_0000285316" description="DNA damage-inducible protein 1">
    <location>
        <begin position="1"/>
        <end position="405"/>
    </location>
</feature>
<feature type="domain" description="Ubiquitin-like" evidence="5">
    <location>
        <begin position="1"/>
        <end position="57"/>
    </location>
</feature>
<feature type="domain" description="UBA" evidence="4">
    <location>
        <begin position="367"/>
        <end position="405"/>
    </location>
</feature>
<feature type="region of interest" description="Disordered" evidence="6">
    <location>
        <begin position="57"/>
        <end position="88"/>
    </location>
</feature>
<feature type="region of interest" description="Disordered" evidence="6">
    <location>
        <begin position="337"/>
        <end position="368"/>
    </location>
</feature>
<feature type="compositionally biased region" description="Polar residues" evidence="6">
    <location>
        <begin position="71"/>
        <end position="80"/>
    </location>
</feature>
<feature type="compositionally biased region" description="Low complexity" evidence="6">
    <location>
        <begin position="341"/>
        <end position="356"/>
    </location>
</feature>
<feature type="active site" evidence="7">
    <location>
        <position position="204"/>
    </location>
</feature>
<accession>A1DCU5</accession>
<keyword id="KW-0064">Aspartyl protease</keyword>
<keyword id="KW-0963">Cytoplasm</keyword>
<keyword id="KW-0378">Hydrolase</keyword>
<keyword id="KW-0645">Protease</keyword>
<keyword id="KW-0653">Protein transport</keyword>
<keyword id="KW-1185">Reference proteome</keyword>
<keyword id="KW-0813">Transport</keyword>
<comment type="function">
    <text evidence="2 3">Probable aspartic protease. May be involved in the regulation of exocytosis. Acts as a linker between the 19S proteasome and polyubiquitinated proteins via UBA domain interactions with ubiquitin for their subsequent degradation. Required for S-phase checkpoint control.</text>
</comment>
<comment type="subunit">
    <text evidence="1">Binds ubiquitin and polyubiquitinated proteins.</text>
</comment>
<comment type="subcellular location">
    <subcellularLocation>
        <location evidence="1">Cytoplasm</location>
    </subcellularLocation>
</comment>
<comment type="similarity">
    <text evidence="7">Belongs to the DDI1 family.</text>
</comment>